<evidence type="ECO:0000255" key="1">
    <source>
        <dbReference type="HAMAP-Rule" id="MF_00700"/>
    </source>
</evidence>
<evidence type="ECO:0000269" key="2">
    <source>
    </source>
</evidence>
<feature type="chain" id="PRO_0000046742" description="DNA primase small subunit PriS">
    <location>
        <begin position="1"/>
        <end position="350"/>
    </location>
</feature>
<feature type="active site" evidence="1">
    <location>
        <position position="97"/>
    </location>
</feature>
<feature type="active site" evidence="1">
    <location>
        <position position="99"/>
    </location>
</feature>
<feature type="active site" evidence="1">
    <location>
        <position position="251"/>
    </location>
</feature>
<keyword id="KW-0235">DNA replication</keyword>
<keyword id="KW-0240">DNA-directed RNA polymerase</keyword>
<keyword id="KW-0460">Magnesium</keyword>
<keyword id="KW-0464">Manganese</keyword>
<keyword id="KW-0479">Metal-binding</keyword>
<keyword id="KW-0548">Nucleotidyltransferase</keyword>
<keyword id="KW-0639">Primosome</keyword>
<keyword id="KW-1185">Reference proteome</keyword>
<keyword id="KW-0804">Transcription</keyword>
<keyword id="KW-0808">Transferase</keyword>
<keyword id="KW-0862">Zinc</keyword>
<accession>Q58249</accession>
<comment type="function">
    <text evidence="1 2">Catalytic subunit of DNA primase, an RNA polymerase that catalyzes the synthesis of short RNA molecules used as primers for DNA polymerase during DNA replication. The small subunit contains the primase catalytic core and has DNA synthesis activity on its own. Binding to the large subunit stabilizes and modulates the activity, increasing the rate of DNA synthesis while decreasing the length of the DNA fragments, and conferring RNA synthesis capability. The DNA polymerase activity may enable DNA primase to also catalyze primer extension after primer synthesis. May also play a role in DNA repair.</text>
</comment>
<comment type="cofactor">
    <cofactor evidence="1 2">
        <name>Mg(2+)</name>
        <dbReference type="ChEBI" id="CHEBI:18420"/>
    </cofactor>
    <cofactor evidence="1 2">
        <name>Mn(2+)</name>
        <dbReference type="ChEBI" id="CHEBI:29035"/>
    </cofactor>
    <cofactor evidence="2">
        <name>Zn(2+)</name>
        <dbReference type="ChEBI" id="CHEBI:29105"/>
    </cofactor>
</comment>
<comment type="biophysicochemical properties">
    <phDependence>
        <text evidence="2">Optimum pH is 8.06.</text>
    </phDependence>
    <temperatureDependence>
        <text evidence="2">Optimum temperature is 60-70 degrees Celsius.</text>
    </temperatureDependence>
</comment>
<comment type="subunit">
    <text evidence="1">Heterodimer of a small subunit (PriS) and a large subunit (PriL).</text>
</comment>
<comment type="similarity">
    <text evidence="1">Belongs to the eukaryotic-type primase small subunit family.</text>
</comment>
<gene>
    <name evidence="1" type="primary">priS</name>
    <name type="synonym">priA</name>
    <name type="ordered locus">MJ0839</name>
</gene>
<organism>
    <name type="scientific">Methanocaldococcus jannaschii (strain ATCC 43067 / DSM 2661 / JAL-1 / JCM 10045 / NBRC 100440)</name>
    <name type="common">Methanococcus jannaschii</name>
    <dbReference type="NCBI Taxonomy" id="243232"/>
    <lineage>
        <taxon>Archaea</taxon>
        <taxon>Methanobacteriati</taxon>
        <taxon>Methanobacteriota</taxon>
        <taxon>Methanomada group</taxon>
        <taxon>Methanococci</taxon>
        <taxon>Methanococcales</taxon>
        <taxon>Methanocaldococcaceae</taxon>
        <taxon>Methanocaldococcus</taxon>
    </lineage>
</organism>
<protein>
    <recommendedName>
        <fullName evidence="1">DNA primase small subunit PriS</fullName>
        <ecNumber evidence="1">2.7.7.-</ecNumber>
    </recommendedName>
</protein>
<dbReference type="EC" id="2.7.7.-" evidence="1"/>
<dbReference type="EMBL" id="L77117">
    <property type="protein sequence ID" value="AAB98844.1"/>
    <property type="molecule type" value="Genomic_DNA"/>
</dbReference>
<dbReference type="RefSeq" id="WP_010870353.1">
    <property type="nucleotide sequence ID" value="NC_000909.1"/>
</dbReference>
<dbReference type="SMR" id="Q58249"/>
<dbReference type="FunCoup" id="Q58249">
    <property type="interactions" value="16"/>
</dbReference>
<dbReference type="STRING" id="243232.MJ_0839"/>
<dbReference type="PaxDb" id="243232-MJ_0839"/>
<dbReference type="EnsemblBacteria" id="AAB98844">
    <property type="protein sequence ID" value="AAB98844"/>
    <property type="gene ID" value="MJ_0839"/>
</dbReference>
<dbReference type="GeneID" id="1451727"/>
<dbReference type="KEGG" id="mja:MJ_0839"/>
<dbReference type="eggNOG" id="arCOG04110">
    <property type="taxonomic scope" value="Archaea"/>
</dbReference>
<dbReference type="HOGENOM" id="CLU_056123_1_0_2"/>
<dbReference type="InParanoid" id="Q58249"/>
<dbReference type="OrthoDB" id="31125at2157"/>
<dbReference type="PhylomeDB" id="Q58249"/>
<dbReference type="BRENDA" id="2.7.7.102">
    <property type="organism ID" value="3260"/>
</dbReference>
<dbReference type="BRENDA" id="2.7.7.B16">
    <property type="organism ID" value="3260"/>
</dbReference>
<dbReference type="Proteomes" id="UP000000805">
    <property type="component" value="Chromosome"/>
</dbReference>
<dbReference type="GO" id="GO:0000428">
    <property type="term" value="C:DNA-directed RNA polymerase complex"/>
    <property type="evidence" value="ECO:0007669"/>
    <property type="project" value="UniProtKB-KW"/>
</dbReference>
<dbReference type="GO" id="GO:1990077">
    <property type="term" value="C:primosome complex"/>
    <property type="evidence" value="ECO:0007669"/>
    <property type="project" value="UniProtKB-KW"/>
</dbReference>
<dbReference type="GO" id="GO:0003899">
    <property type="term" value="F:DNA-directed RNA polymerase activity"/>
    <property type="evidence" value="ECO:0007669"/>
    <property type="project" value="InterPro"/>
</dbReference>
<dbReference type="GO" id="GO:0046872">
    <property type="term" value="F:metal ion binding"/>
    <property type="evidence" value="ECO:0007669"/>
    <property type="project" value="UniProtKB-KW"/>
</dbReference>
<dbReference type="GO" id="GO:0006269">
    <property type="term" value="P:DNA replication, synthesis of primer"/>
    <property type="evidence" value="ECO:0000318"/>
    <property type="project" value="GO_Central"/>
</dbReference>
<dbReference type="CDD" id="cd04860">
    <property type="entry name" value="AE_Prim_S"/>
    <property type="match status" value="1"/>
</dbReference>
<dbReference type="Gene3D" id="3.90.920.10">
    <property type="entry name" value="DNA primase, PRIM domain"/>
    <property type="match status" value="1"/>
</dbReference>
<dbReference type="HAMAP" id="MF_00700">
    <property type="entry name" value="DNA_primase_sml_arc"/>
    <property type="match status" value="1"/>
</dbReference>
<dbReference type="InterPro" id="IPR002755">
    <property type="entry name" value="DNA_primase_S"/>
</dbReference>
<dbReference type="InterPro" id="IPR014052">
    <property type="entry name" value="DNA_primase_ssu_euk/arc"/>
</dbReference>
<dbReference type="InterPro" id="IPR023639">
    <property type="entry name" value="DNA_primase_ssu_PriS"/>
</dbReference>
<dbReference type="NCBIfam" id="TIGR00335">
    <property type="entry name" value="primase_sml"/>
    <property type="match status" value="1"/>
</dbReference>
<dbReference type="PANTHER" id="PTHR10536">
    <property type="entry name" value="DNA PRIMASE SMALL SUBUNIT"/>
    <property type="match status" value="1"/>
</dbReference>
<dbReference type="Pfam" id="PF01896">
    <property type="entry name" value="DNA_primase_S"/>
    <property type="match status" value="1"/>
</dbReference>
<dbReference type="SUPFAM" id="SSF56747">
    <property type="entry name" value="Prim-pol domain"/>
    <property type="match status" value="1"/>
</dbReference>
<sequence length="350" mass="41802">MNTFAEVQKLYREYYNFAIKNNILEIPEGIEYREFGYGYLKKVDNRNLSFKNEREYKDWVLKNAPMHFYKSLAYMLYPNKSGGASKKGIFRRELAFDIDVHKTKKCKHEDDWICKHCLEEAKNQAIYLIEEFLIPDFGLNEEDLKIVFSGNRGYHIYIKPRDEKIRDIIESYSKEDRRFLMDYILGKNLNLNSVGSGWRRRLIKAIKERDKRISTKKLENEKNWKKVIENLKSKNKIYNIIEETKNKIELDEKVMDDDIRLLRVINSLHGYTGFIVKPLSGLDELRRFNPLEDAIFKDFENKVYEVNIFDDRKFEIEICGKKYNNKSKKITASALLYLFGHNIKFELLKS</sequence>
<proteinExistence type="evidence at protein level"/>
<name>PRIS_METJA</name>
<reference key="1">
    <citation type="journal article" date="1996" name="Science">
        <title>Complete genome sequence of the methanogenic archaeon, Methanococcus jannaschii.</title>
        <authorList>
            <person name="Bult C.J."/>
            <person name="White O."/>
            <person name="Olsen G.J."/>
            <person name="Zhou L."/>
            <person name="Fleischmann R.D."/>
            <person name="Sutton G.G."/>
            <person name="Blake J.A."/>
            <person name="FitzGerald L.M."/>
            <person name="Clayton R.A."/>
            <person name="Gocayne J.D."/>
            <person name="Kerlavage A.R."/>
            <person name="Dougherty B.A."/>
            <person name="Tomb J.-F."/>
            <person name="Adams M.D."/>
            <person name="Reich C.I."/>
            <person name="Overbeek R."/>
            <person name="Kirkness E.F."/>
            <person name="Weinstock K.G."/>
            <person name="Merrick J.M."/>
            <person name="Glodek A."/>
            <person name="Scott J.L."/>
            <person name="Geoghagen N.S.M."/>
            <person name="Weidman J.F."/>
            <person name="Fuhrmann J.L."/>
            <person name="Nguyen D."/>
            <person name="Utterback T.R."/>
            <person name="Kelley J.M."/>
            <person name="Peterson J.D."/>
            <person name="Sadow P.W."/>
            <person name="Hanna M.C."/>
            <person name="Cotton M.D."/>
            <person name="Roberts K.M."/>
            <person name="Hurst M.A."/>
            <person name="Kaine B.P."/>
            <person name="Borodovsky M."/>
            <person name="Klenk H.-P."/>
            <person name="Fraser C.M."/>
            <person name="Smith H.O."/>
            <person name="Woese C.R."/>
            <person name="Venter J.C."/>
        </authorList>
    </citation>
    <scope>NUCLEOTIDE SEQUENCE [LARGE SCALE GENOMIC DNA]</scope>
    <source>
        <strain>ATCC 43067 / DSM 2661 / JAL-1 / JCM 10045 / NBRC 100440</strain>
    </source>
</reference>
<reference key="2">
    <citation type="journal article" date="1999" name="Nucleic Acids Res.">
        <title>Identification and characterization of a DNA primase from the hyperthermophilic archaeon Methanococcus jannaschii.</title>
        <authorList>
            <person name="Desogus G."/>
            <person name="Onesti S."/>
            <person name="Brick P."/>
            <person name="Rossi M."/>
            <person name="Pisani F."/>
        </authorList>
    </citation>
    <scope>FUNCTION</scope>
    <scope>COFACTOR</scope>
    <scope>BIOPHYSICOCHEMICAL PROPERTIES</scope>
</reference>